<protein>
    <recommendedName>
        <fullName evidence="1">Acyl carrier protein</fullName>
        <shortName evidence="1">ACP</shortName>
    </recommendedName>
</protein>
<organism>
    <name type="scientific">Cereibacter sphaeroides (strain ATCC 17029 / ATH 2.4.9)</name>
    <name type="common">Rhodobacter sphaeroides</name>
    <dbReference type="NCBI Taxonomy" id="349101"/>
    <lineage>
        <taxon>Bacteria</taxon>
        <taxon>Pseudomonadati</taxon>
        <taxon>Pseudomonadota</taxon>
        <taxon>Alphaproteobacteria</taxon>
        <taxon>Rhodobacterales</taxon>
        <taxon>Paracoccaceae</taxon>
        <taxon>Cereibacter</taxon>
    </lineage>
</organism>
<comment type="function">
    <text evidence="1">Carrier of the growing fatty acid chain in fatty acid biosynthesis.</text>
</comment>
<comment type="pathway">
    <text evidence="1">Lipid metabolism; fatty acid biosynthesis.</text>
</comment>
<comment type="subcellular location">
    <subcellularLocation>
        <location evidence="1">Cytoplasm</location>
    </subcellularLocation>
</comment>
<comment type="PTM">
    <text evidence="1">4'-phosphopantetheine is transferred from CoA to a specific serine of apo-ACP by AcpS. This modification is essential for activity because fatty acids are bound in thioester linkage to the sulfhydryl of the prosthetic group.</text>
</comment>
<comment type="similarity">
    <text evidence="1">Belongs to the acyl carrier protein (ACP) family.</text>
</comment>
<dbReference type="EMBL" id="CP000577">
    <property type="protein sequence ID" value="ABN76235.1"/>
    <property type="molecule type" value="Genomic_DNA"/>
</dbReference>
<dbReference type="RefSeq" id="WP_002719616.1">
    <property type="nucleotide sequence ID" value="NC_009049.1"/>
</dbReference>
<dbReference type="SMR" id="A3PIR9"/>
<dbReference type="KEGG" id="rsh:Rsph17029_1125"/>
<dbReference type="HOGENOM" id="CLU_108696_5_1_5"/>
<dbReference type="UniPathway" id="UPA00094"/>
<dbReference type="GO" id="GO:0005829">
    <property type="term" value="C:cytosol"/>
    <property type="evidence" value="ECO:0007669"/>
    <property type="project" value="TreeGrafter"/>
</dbReference>
<dbReference type="GO" id="GO:0016020">
    <property type="term" value="C:membrane"/>
    <property type="evidence" value="ECO:0007669"/>
    <property type="project" value="GOC"/>
</dbReference>
<dbReference type="GO" id="GO:0000035">
    <property type="term" value="F:acyl binding"/>
    <property type="evidence" value="ECO:0007669"/>
    <property type="project" value="TreeGrafter"/>
</dbReference>
<dbReference type="GO" id="GO:0000036">
    <property type="term" value="F:acyl carrier activity"/>
    <property type="evidence" value="ECO:0007669"/>
    <property type="project" value="UniProtKB-UniRule"/>
</dbReference>
<dbReference type="GO" id="GO:0009245">
    <property type="term" value="P:lipid A biosynthetic process"/>
    <property type="evidence" value="ECO:0007669"/>
    <property type="project" value="TreeGrafter"/>
</dbReference>
<dbReference type="FunFam" id="1.10.1200.10:FF:000001">
    <property type="entry name" value="Acyl carrier protein"/>
    <property type="match status" value="1"/>
</dbReference>
<dbReference type="Gene3D" id="1.10.1200.10">
    <property type="entry name" value="ACP-like"/>
    <property type="match status" value="1"/>
</dbReference>
<dbReference type="HAMAP" id="MF_01217">
    <property type="entry name" value="Acyl_carrier"/>
    <property type="match status" value="1"/>
</dbReference>
<dbReference type="InterPro" id="IPR003231">
    <property type="entry name" value="ACP"/>
</dbReference>
<dbReference type="InterPro" id="IPR036736">
    <property type="entry name" value="ACP-like_sf"/>
</dbReference>
<dbReference type="InterPro" id="IPR009081">
    <property type="entry name" value="PP-bd_ACP"/>
</dbReference>
<dbReference type="InterPro" id="IPR006162">
    <property type="entry name" value="Ppantetheine_attach_site"/>
</dbReference>
<dbReference type="NCBIfam" id="TIGR00517">
    <property type="entry name" value="acyl_carrier"/>
    <property type="match status" value="1"/>
</dbReference>
<dbReference type="NCBIfam" id="NF002148">
    <property type="entry name" value="PRK00982.1-2"/>
    <property type="match status" value="1"/>
</dbReference>
<dbReference type="NCBIfam" id="NF002149">
    <property type="entry name" value="PRK00982.1-3"/>
    <property type="match status" value="1"/>
</dbReference>
<dbReference type="NCBIfam" id="NF002150">
    <property type="entry name" value="PRK00982.1-4"/>
    <property type="match status" value="1"/>
</dbReference>
<dbReference type="NCBIfam" id="NF002151">
    <property type="entry name" value="PRK00982.1-5"/>
    <property type="match status" value="1"/>
</dbReference>
<dbReference type="PANTHER" id="PTHR20863">
    <property type="entry name" value="ACYL CARRIER PROTEIN"/>
    <property type="match status" value="1"/>
</dbReference>
<dbReference type="PANTHER" id="PTHR20863:SF76">
    <property type="entry name" value="CARRIER DOMAIN-CONTAINING PROTEIN"/>
    <property type="match status" value="1"/>
</dbReference>
<dbReference type="Pfam" id="PF00550">
    <property type="entry name" value="PP-binding"/>
    <property type="match status" value="1"/>
</dbReference>
<dbReference type="SUPFAM" id="SSF47336">
    <property type="entry name" value="ACP-like"/>
    <property type="match status" value="1"/>
</dbReference>
<dbReference type="PROSITE" id="PS50075">
    <property type="entry name" value="CARRIER"/>
    <property type="match status" value="1"/>
</dbReference>
<dbReference type="PROSITE" id="PS00012">
    <property type="entry name" value="PHOSPHOPANTETHEINE"/>
    <property type="match status" value="1"/>
</dbReference>
<sequence>MSDIADRVKKIVVEHLGVEEEKVTENASFIDDLGADSLDTVELVMAFEEEFGIEIPDDAAETIQTFGDAVKFISEAA</sequence>
<proteinExistence type="inferred from homology"/>
<gene>
    <name evidence="1" type="primary">acpP</name>
    <name type="ordered locus">Rsph17029_1125</name>
</gene>
<feature type="chain" id="PRO_1000066677" description="Acyl carrier protein">
    <location>
        <begin position="1"/>
        <end position="77"/>
    </location>
</feature>
<feature type="domain" description="Carrier" evidence="2">
    <location>
        <begin position="2"/>
        <end position="77"/>
    </location>
</feature>
<feature type="modified residue" description="O-(pantetheine 4'-phosphoryl)serine" evidence="2">
    <location>
        <position position="37"/>
    </location>
</feature>
<accession>A3PIR9</accession>
<reference key="1">
    <citation type="submission" date="2007-02" db="EMBL/GenBank/DDBJ databases">
        <title>Complete sequence of chromosome 1 of Rhodobacter sphaeroides ATCC 17029.</title>
        <authorList>
            <person name="Copeland A."/>
            <person name="Lucas S."/>
            <person name="Lapidus A."/>
            <person name="Barry K."/>
            <person name="Detter J.C."/>
            <person name="Glavina del Rio T."/>
            <person name="Hammon N."/>
            <person name="Israni S."/>
            <person name="Dalin E."/>
            <person name="Tice H."/>
            <person name="Pitluck S."/>
            <person name="Kiss H."/>
            <person name="Brettin T."/>
            <person name="Bruce D."/>
            <person name="Han C."/>
            <person name="Tapia R."/>
            <person name="Gilna P."/>
            <person name="Schmutz J."/>
            <person name="Larimer F."/>
            <person name="Land M."/>
            <person name="Hauser L."/>
            <person name="Kyrpides N."/>
            <person name="Mikhailova N."/>
            <person name="Richardson P."/>
            <person name="Mackenzie C."/>
            <person name="Choudhary M."/>
            <person name="Donohue T.J."/>
            <person name="Kaplan S."/>
        </authorList>
    </citation>
    <scope>NUCLEOTIDE SEQUENCE [LARGE SCALE GENOMIC DNA]</scope>
    <source>
        <strain>ATCC 17029 / ATH 2.4.9</strain>
    </source>
</reference>
<keyword id="KW-0963">Cytoplasm</keyword>
<keyword id="KW-0275">Fatty acid biosynthesis</keyword>
<keyword id="KW-0276">Fatty acid metabolism</keyword>
<keyword id="KW-0444">Lipid biosynthesis</keyword>
<keyword id="KW-0443">Lipid metabolism</keyword>
<keyword id="KW-0596">Phosphopantetheine</keyword>
<keyword id="KW-0597">Phosphoprotein</keyword>
<name>ACP_CERS1</name>
<evidence type="ECO:0000255" key="1">
    <source>
        <dbReference type="HAMAP-Rule" id="MF_01217"/>
    </source>
</evidence>
<evidence type="ECO:0000255" key="2">
    <source>
        <dbReference type="PROSITE-ProRule" id="PRU00258"/>
    </source>
</evidence>